<feature type="chain" id="PRO_0000127742" description="Small ribosomal subunit protein RACK1">
    <location>
        <begin position="1"/>
        <end position="329"/>
    </location>
</feature>
<feature type="repeat" description="WD 1">
    <location>
        <begin position="19"/>
        <end position="59"/>
    </location>
</feature>
<feature type="repeat" description="WD 2">
    <location>
        <begin position="68"/>
        <end position="107"/>
    </location>
</feature>
<feature type="repeat" description="WD 3">
    <location>
        <begin position="110"/>
        <end position="149"/>
    </location>
</feature>
<feature type="repeat" description="WD 4">
    <location>
        <begin position="154"/>
        <end position="193"/>
    </location>
</feature>
<feature type="repeat" description="WD 5">
    <location>
        <begin position="196"/>
        <end position="235"/>
    </location>
</feature>
<feature type="repeat" description="WD 6">
    <location>
        <begin position="237"/>
        <end position="275"/>
    </location>
</feature>
<feature type="repeat" description="WD 7">
    <location>
        <begin position="295"/>
        <end position="328"/>
    </location>
</feature>
<feature type="sequence conflict" description="In Ref. 1; AAA70100." evidence="1" ref="1">
    <original>DWVSCIRFSP</original>
    <variation>AVLIGFHVSDSHQ</variation>
    <location>
        <begin position="157"/>
        <end position="166"/>
    </location>
</feature>
<evidence type="ECO:0000305" key="1"/>
<name>GBLP_DICDI</name>
<sequence>MEQQKAPQVTYLEVGSLVGHNGFVTSIAVSPENPDTIISSSRDKTVMVWQLTPTDATSPGKAHRSLKGHSHFVQDVVISHDGQFALSGSWDNTLRLWDITKGVSTRLFKGHTQDVMSVAFSSDNRQIISGSRDATIKVWNTLGECKFTLEGPEAHQDWVSCIRFSPNTPTIVSGSWDNKVKIWDIKSFKCNHTLTDHTGYVNTVTISPDGSLCASGGKDTFACLWELSSGKPLYKLEARNTINALAFSPNKYWLSAATDDKIIIWDLLTKQVLAEIVPEVKEQAFDSKKKKESKPKAPACLSLAWSADGSVLYAGYNDGLIRVYKSSSQ</sequence>
<protein>
    <recommendedName>
        <fullName evidence="1">Small ribosomal subunit protein RACK1</fullName>
    </recommendedName>
    <alternativeName>
        <fullName>Guanine nucleotide-binding protein subunit beta-like protein</fullName>
    </alternativeName>
</protein>
<dbReference type="EMBL" id="U27537">
    <property type="protein sequence ID" value="AAA70100.1"/>
    <property type="molecule type" value="mRNA"/>
</dbReference>
<dbReference type="EMBL" id="AAFI02000013">
    <property type="protein sequence ID" value="EAL69803.1"/>
    <property type="molecule type" value="Genomic_DNA"/>
</dbReference>
<dbReference type="RefSeq" id="XP_643839.1">
    <property type="nucleotide sequence ID" value="XM_638747.1"/>
</dbReference>
<dbReference type="SMR" id="P46800"/>
<dbReference type="FunCoup" id="P46800">
    <property type="interactions" value="839"/>
</dbReference>
<dbReference type="IntAct" id="P46800">
    <property type="interactions" value="1"/>
</dbReference>
<dbReference type="STRING" id="44689.P46800"/>
<dbReference type="PaxDb" id="44689-DDB0185122"/>
<dbReference type="EnsemblProtists" id="EAL69803">
    <property type="protein sequence ID" value="EAL69803"/>
    <property type="gene ID" value="DDB_G0275045"/>
</dbReference>
<dbReference type="GeneID" id="8619886"/>
<dbReference type="KEGG" id="ddi:DDB_G0275045"/>
<dbReference type="dictyBase" id="DDB_G0275045">
    <property type="gene designation" value="gpbB"/>
</dbReference>
<dbReference type="VEuPathDB" id="AmoebaDB:DDB_G0275045"/>
<dbReference type="eggNOG" id="KOG0279">
    <property type="taxonomic scope" value="Eukaryota"/>
</dbReference>
<dbReference type="HOGENOM" id="CLU_000288_57_7_1"/>
<dbReference type="InParanoid" id="P46800"/>
<dbReference type="OMA" id="NCKLKIN"/>
<dbReference type="PhylomeDB" id="P46800"/>
<dbReference type="PRO" id="PR:P46800"/>
<dbReference type="Proteomes" id="UP000002195">
    <property type="component" value="Chromosome 2"/>
</dbReference>
<dbReference type="GO" id="GO:0031252">
    <property type="term" value="C:cell leading edge"/>
    <property type="evidence" value="ECO:0000314"/>
    <property type="project" value="dictyBase"/>
</dbReference>
<dbReference type="GO" id="GO:0071944">
    <property type="term" value="C:cell periphery"/>
    <property type="evidence" value="ECO:0000314"/>
    <property type="project" value="dictyBase"/>
</dbReference>
<dbReference type="GO" id="GO:0005813">
    <property type="term" value="C:centrosome"/>
    <property type="evidence" value="ECO:0007005"/>
    <property type="project" value="dictyBase"/>
</dbReference>
<dbReference type="GO" id="GO:0005829">
    <property type="term" value="C:cytosol"/>
    <property type="evidence" value="ECO:0000314"/>
    <property type="project" value="dictyBase"/>
</dbReference>
<dbReference type="GO" id="GO:0031012">
    <property type="term" value="C:extracellular matrix"/>
    <property type="evidence" value="ECO:0007005"/>
    <property type="project" value="dictyBase"/>
</dbReference>
<dbReference type="GO" id="GO:0016020">
    <property type="term" value="C:membrane"/>
    <property type="evidence" value="ECO:0000314"/>
    <property type="project" value="dictyBase"/>
</dbReference>
<dbReference type="GO" id="GO:0005634">
    <property type="term" value="C:nucleus"/>
    <property type="evidence" value="ECO:0000318"/>
    <property type="project" value="GO_Central"/>
</dbReference>
<dbReference type="GO" id="GO:0045335">
    <property type="term" value="C:phagocytic vesicle"/>
    <property type="evidence" value="ECO:0007005"/>
    <property type="project" value="dictyBase"/>
</dbReference>
<dbReference type="GO" id="GO:1990904">
    <property type="term" value="C:ribonucleoprotein complex"/>
    <property type="evidence" value="ECO:0007669"/>
    <property type="project" value="UniProtKB-KW"/>
</dbReference>
<dbReference type="GO" id="GO:0005840">
    <property type="term" value="C:ribosome"/>
    <property type="evidence" value="ECO:0007669"/>
    <property type="project" value="UniProtKB-KW"/>
</dbReference>
<dbReference type="GO" id="GO:0042802">
    <property type="term" value="F:identical protein binding"/>
    <property type="evidence" value="ECO:0000353"/>
    <property type="project" value="dictyBase"/>
</dbReference>
<dbReference type="GO" id="GO:0035091">
    <property type="term" value="F:phosphatidylinositol binding"/>
    <property type="evidence" value="ECO:0000314"/>
    <property type="project" value="dictyBase"/>
</dbReference>
<dbReference type="GO" id="GO:0001786">
    <property type="term" value="F:phosphatidylserine binding"/>
    <property type="evidence" value="ECO:0000314"/>
    <property type="project" value="dictyBase"/>
</dbReference>
<dbReference type="GO" id="GO:0005080">
    <property type="term" value="F:protein kinase C binding"/>
    <property type="evidence" value="ECO:0000318"/>
    <property type="project" value="GO_Central"/>
</dbReference>
<dbReference type="GO" id="GO:0043022">
    <property type="term" value="F:ribosome binding"/>
    <property type="evidence" value="ECO:0000318"/>
    <property type="project" value="GO_Central"/>
</dbReference>
<dbReference type="GO" id="GO:0045182">
    <property type="term" value="F:translation regulator activity"/>
    <property type="evidence" value="ECO:0007669"/>
    <property type="project" value="InterPro"/>
</dbReference>
<dbReference type="GO" id="GO:2001125">
    <property type="term" value="P:negative regulation of translational frameshifting"/>
    <property type="evidence" value="ECO:0000318"/>
    <property type="project" value="GO_Central"/>
</dbReference>
<dbReference type="GO" id="GO:0072344">
    <property type="term" value="P:rescue of stalled ribosome"/>
    <property type="evidence" value="ECO:0000318"/>
    <property type="project" value="GO_Central"/>
</dbReference>
<dbReference type="GO" id="GO:0030587">
    <property type="term" value="P:sorocarp development"/>
    <property type="evidence" value="ECO:0000315"/>
    <property type="project" value="dictyBase"/>
</dbReference>
<dbReference type="CDD" id="cd00200">
    <property type="entry name" value="WD40"/>
    <property type="match status" value="1"/>
</dbReference>
<dbReference type="FunFam" id="2.130.10.10:FF:000018">
    <property type="entry name" value="Receptor for activated C kinase 1"/>
    <property type="match status" value="1"/>
</dbReference>
<dbReference type="Gene3D" id="2.130.10.10">
    <property type="entry name" value="YVTN repeat-like/Quinoprotein amine dehydrogenase"/>
    <property type="match status" value="1"/>
</dbReference>
<dbReference type="InterPro" id="IPR020472">
    <property type="entry name" value="G-protein_beta_WD-40_rep"/>
</dbReference>
<dbReference type="InterPro" id="IPR045223">
    <property type="entry name" value="RACK1-like"/>
</dbReference>
<dbReference type="InterPro" id="IPR015943">
    <property type="entry name" value="WD40/YVTN_repeat-like_dom_sf"/>
</dbReference>
<dbReference type="InterPro" id="IPR019775">
    <property type="entry name" value="WD40_repeat_CS"/>
</dbReference>
<dbReference type="InterPro" id="IPR036322">
    <property type="entry name" value="WD40_repeat_dom_sf"/>
</dbReference>
<dbReference type="InterPro" id="IPR001680">
    <property type="entry name" value="WD40_rpt"/>
</dbReference>
<dbReference type="PANTHER" id="PTHR19868">
    <property type="entry name" value="RECEPTOR FOR ACTIVATED PROTEIN KINASE C RACK1"/>
    <property type="match status" value="1"/>
</dbReference>
<dbReference type="Pfam" id="PF00400">
    <property type="entry name" value="WD40"/>
    <property type="match status" value="7"/>
</dbReference>
<dbReference type="PRINTS" id="PR00320">
    <property type="entry name" value="GPROTEINBRPT"/>
</dbReference>
<dbReference type="SMART" id="SM00320">
    <property type="entry name" value="WD40"/>
    <property type="match status" value="7"/>
</dbReference>
<dbReference type="SUPFAM" id="SSF50978">
    <property type="entry name" value="WD40 repeat-like"/>
    <property type="match status" value="1"/>
</dbReference>
<dbReference type="PROSITE" id="PS00678">
    <property type="entry name" value="WD_REPEATS_1"/>
    <property type="match status" value="4"/>
</dbReference>
<dbReference type="PROSITE" id="PS50082">
    <property type="entry name" value="WD_REPEATS_2"/>
    <property type="match status" value="6"/>
</dbReference>
<dbReference type="PROSITE" id="PS50294">
    <property type="entry name" value="WD_REPEATS_REGION"/>
    <property type="match status" value="1"/>
</dbReference>
<accession>P46800</accession>
<accession>Q553X2</accession>
<accession>Q869Y6</accession>
<reference key="1">
    <citation type="submission" date="1995-05" db="EMBL/GenBank/DDBJ databases">
        <title>Cloning of a Dictyostelium discoideum cDNA encodes a G beta subunit-like protein.</title>
        <authorList>
            <person name="Jho E."/>
            <person name="Kopachik W."/>
        </authorList>
    </citation>
    <scope>NUCLEOTIDE SEQUENCE [MRNA]</scope>
    <source>
        <strain>AX3</strain>
    </source>
</reference>
<reference key="2">
    <citation type="journal article" date="2002" name="Nature">
        <title>Sequence and analysis of chromosome 2 of Dictyostelium discoideum.</title>
        <authorList>
            <person name="Gloeckner G."/>
            <person name="Eichinger L."/>
            <person name="Szafranski K."/>
            <person name="Pachebat J.A."/>
            <person name="Bankier A.T."/>
            <person name="Dear P.H."/>
            <person name="Lehmann R."/>
            <person name="Baumgart C."/>
            <person name="Parra G."/>
            <person name="Abril J.F."/>
            <person name="Guigo R."/>
            <person name="Kumpf K."/>
            <person name="Tunggal B."/>
            <person name="Cox E.C."/>
            <person name="Quail M.A."/>
            <person name="Platzer M."/>
            <person name="Rosenthal A."/>
            <person name="Noegel A.A."/>
        </authorList>
    </citation>
    <scope>NUCLEOTIDE SEQUENCE [LARGE SCALE GENOMIC DNA]</scope>
    <source>
        <strain>AX4</strain>
    </source>
</reference>
<reference key="3">
    <citation type="journal article" date="2005" name="Nature">
        <title>The genome of the social amoeba Dictyostelium discoideum.</title>
        <authorList>
            <person name="Eichinger L."/>
            <person name="Pachebat J.A."/>
            <person name="Gloeckner G."/>
            <person name="Rajandream M.A."/>
            <person name="Sucgang R."/>
            <person name="Berriman M."/>
            <person name="Song J."/>
            <person name="Olsen R."/>
            <person name="Szafranski K."/>
            <person name="Xu Q."/>
            <person name="Tunggal B."/>
            <person name="Kummerfeld S."/>
            <person name="Madera M."/>
            <person name="Konfortov B.A."/>
            <person name="Rivero F."/>
            <person name="Bankier A.T."/>
            <person name="Lehmann R."/>
            <person name="Hamlin N."/>
            <person name="Davies R."/>
            <person name="Gaudet P."/>
            <person name="Fey P."/>
            <person name="Pilcher K."/>
            <person name="Chen G."/>
            <person name="Saunders D."/>
            <person name="Sodergren E.J."/>
            <person name="Davis P."/>
            <person name="Kerhornou A."/>
            <person name="Nie X."/>
            <person name="Hall N."/>
            <person name="Anjard C."/>
            <person name="Hemphill L."/>
            <person name="Bason N."/>
            <person name="Farbrother P."/>
            <person name="Desany B."/>
            <person name="Just E."/>
            <person name="Morio T."/>
            <person name="Rost R."/>
            <person name="Churcher C.M."/>
            <person name="Cooper J."/>
            <person name="Haydock S."/>
            <person name="van Driessche N."/>
            <person name="Cronin A."/>
            <person name="Goodhead I."/>
            <person name="Muzny D.M."/>
            <person name="Mourier T."/>
            <person name="Pain A."/>
            <person name="Lu M."/>
            <person name="Harper D."/>
            <person name="Lindsay R."/>
            <person name="Hauser H."/>
            <person name="James K.D."/>
            <person name="Quiles M."/>
            <person name="Madan Babu M."/>
            <person name="Saito T."/>
            <person name="Buchrieser C."/>
            <person name="Wardroper A."/>
            <person name="Felder M."/>
            <person name="Thangavelu M."/>
            <person name="Johnson D."/>
            <person name="Knights A."/>
            <person name="Loulseged H."/>
            <person name="Mungall K.L."/>
            <person name="Oliver K."/>
            <person name="Price C."/>
            <person name="Quail M.A."/>
            <person name="Urushihara H."/>
            <person name="Hernandez J."/>
            <person name="Rabbinowitsch E."/>
            <person name="Steffen D."/>
            <person name="Sanders M."/>
            <person name="Ma J."/>
            <person name="Kohara Y."/>
            <person name="Sharp S."/>
            <person name="Simmonds M.N."/>
            <person name="Spiegler S."/>
            <person name="Tivey A."/>
            <person name="Sugano S."/>
            <person name="White B."/>
            <person name="Walker D."/>
            <person name="Woodward J.R."/>
            <person name="Winckler T."/>
            <person name="Tanaka Y."/>
            <person name="Shaulsky G."/>
            <person name="Schleicher M."/>
            <person name="Weinstock G.M."/>
            <person name="Rosenthal A."/>
            <person name="Cox E.C."/>
            <person name="Chisholm R.L."/>
            <person name="Gibbs R.A."/>
            <person name="Loomis W.F."/>
            <person name="Platzer M."/>
            <person name="Kay R.R."/>
            <person name="Williams J.G."/>
            <person name="Dear P.H."/>
            <person name="Noegel A.A."/>
            <person name="Barrell B.G."/>
            <person name="Kuspa A."/>
        </authorList>
    </citation>
    <scope>NUCLEOTIDE SEQUENCE [LARGE SCALE GENOMIC DNA]</scope>
    <source>
        <strain>AX4</strain>
    </source>
</reference>
<reference key="4">
    <citation type="journal article" date="2006" name="Eur. J. Cell Biol.">
        <title>Identification and isolation of Dictyostelium microtubule-associated protein interactors by tandem affinity purification.</title>
        <authorList>
            <person name="Koch K.V."/>
            <person name="Reinders Y."/>
            <person name="Ho T.-H."/>
            <person name="Sickmann A."/>
            <person name="Graef R."/>
        </authorList>
    </citation>
    <scope>IDENTIFICATION BY MASS SPECTROMETRY [LARGE SCALE ANALYSIS]</scope>
    <source>
        <strain>AX2</strain>
    </source>
</reference>
<reference key="5">
    <citation type="journal article" date="2006" name="J. Proteome Res.">
        <title>Identification of novel centrosomal proteins in Dictyostelium discoideum by comparative proteomic approaches.</title>
        <authorList>
            <person name="Reinders Y."/>
            <person name="Schulz I."/>
            <person name="Graef R."/>
            <person name="Sickmann A."/>
        </authorList>
    </citation>
    <scope>IDENTIFICATION BY MASS SPECTROMETRY [LARGE SCALE ANALYSIS]</scope>
</reference>
<reference key="6">
    <citation type="journal article" date="2006" name="Mol. Cell. Proteomics">
        <title>Proteomics fingerprinting of phagosome maturation and evidence for the role of a Galpha during uptake.</title>
        <authorList>
            <person name="Gotthardt D."/>
            <person name="Blancheteau V."/>
            <person name="Bosserhoff A."/>
            <person name="Ruppert T."/>
            <person name="Delorenzi M."/>
            <person name="Soldati T."/>
        </authorList>
    </citation>
    <scope>IDENTIFICATION BY MASS SPECTROMETRY [LARGE SCALE ANALYSIS]</scope>
    <source>
        <strain>AX2</strain>
    </source>
</reference>
<comment type="similarity">
    <text evidence="1">Belongs to the WD repeat G protein beta family. Ribosomal protein RACK1 subfamily.</text>
</comment>
<proteinExistence type="evidence at protein level"/>
<keyword id="KW-1185">Reference proteome</keyword>
<keyword id="KW-0677">Repeat</keyword>
<keyword id="KW-0687">Ribonucleoprotein</keyword>
<keyword id="KW-0689">Ribosomal protein</keyword>
<keyword id="KW-0853">WD repeat</keyword>
<gene>
    <name type="primary">gpbB</name>
    <name type="ORF">DDB_G0275045</name>
</gene>
<organism>
    <name type="scientific">Dictyostelium discoideum</name>
    <name type="common">Social amoeba</name>
    <dbReference type="NCBI Taxonomy" id="44689"/>
    <lineage>
        <taxon>Eukaryota</taxon>
        <taxon>Amoebozoa</taxon>
        <taxon>Evosea</taxon>
        <taxon>Eumycetozoa</taxon>
        <taxon>Dictyostelia</taxon>
        <taxon>Dictyosteliales</taxon>
        <taxon>Dictyosteliaceae</taxon>
        <taxon>Dictyostelium</taxon>
    </lineage>
</organism>